<keyword id="KW-0025">Alternative splicing</keyword>
<keyword id="KW-0137">Centromere</keyword>
<keyword id="KW-0158">Chromosome</keyword>
<keyword id="KW-0175">Coiled coil</keyword>
<keyword id="KW-0995">Kinetochore</keyword>
<keyword id="KW-0539">Nucleus</keyword>
<keyword id="KW-0597">Phosphoprotein</keyword>
<keyword id="KW-1185">Reference proteome</keyword>
<name>CENPO_MOUSE</name>
<comment type="function">
    <text evidence="1">Component of the CENPA-CAD (nucleosome distal) complex, a complex recruited to centromeres which is involved in assembly of kinetochore proteins, mitotic progression and chromosome segregation. May be involved in incorporation of newly synthesized CENPA into centromeres via its interaction with the CENPA-NAC complex. Modulates the kinetochore-bound levels of NDC80 complex (By similarity).</text>
</comment>
<comment type="subunit">
    <text evidence="1">Component of the CENPA-CAD complex, composed of CENPI, CENPK, CENPL, CENPO, CENPP, CENPQ, CENPR and CENPS. The CENPA-CAD complex interacts with the CENPA-NAC complex, at least composed of CENPA, CENPC, CENPH, CENPM, CENPN, CENPT and CENPU (By similarity).</text>
</comment>
<comment type="subcellular location">
    <subcellularLocation>
        <location evidence="1">Nucleus</location>
    </subcellularLocation>
    <subcellularLocation>
        <location evidence="1">Chromosome</location>
        <location evidence="1">Centromere</location>
    </subcellularLocation>
    <subcellularLocation>
        <location evidence="1">Chromosome</location>
        <location evidence="1">Centromere</location>
        <location evidence="1">Kinetochore</location>
    </subcellularLocation>
    <text evidence="1">Localizes exclusively in the centromeres. The CENPA-CAD complex is probably recruited on centromeres by the CENPA-NAC complex (By similarity).</text>
</comment>
<comment type="alternative products">
    <event type="alternative splicing"/>
    <isoform>
        <id>Q8K015-1</id>
        <name>1</name>
        <sequence type="displayed"/>
    </isoform>
    <isoform>
        <id>Q8K015-2</id>
        <name>2</name>
        <sequence type="described" ref="VSP_020447 VSP_020448"/>
    </isoform>
</comment>
<comment type="similarity">
    <text evidence="6">Belongs to the CENP-O/MCM21 family.</text>
</comment>
<feature type="chain" id="PRO_0000249503" description="Centromere protein O">
    <location>
        <begin position="1"/>
        <end position="298"/>
    </location>
</feature>
<feature type="region of interest" description="Disordered" evidence="4">
    <location>
        <begin position="29"/>
        <end position="49"/>
    </location>
</feature>
<feature type="coiled-coil region" evidence="3">
    <location>
        <begin position="39"/>
        <end position="74"/>
    </location>
</feature>
<feature type="compositionally biased region" description="Basic and acidic residues" evidence="4">
    <location>
        <begin position="33"/>
        <end position="49"/>
    </location>
</feature>
<feature type="modified residue" description="Phosphoserine" evidence="2">
    <location>
        <position position="35"/>
    </location>
</feature>
<feature type="splice variant" id="VSP_020447" description="In isoform 2." evidence="5">
    <original>SDFCDVLTG</original>
    <variation>NWTADSPSR</variation>
    <location>
        <begin position="197"/>
        <end position="205"/>
    </location>
</feature>
<feature type="splice variant" id="VSP_020448" description="In isoform 2." evidence="5">
    <location>
        <begin position="206"/>
        <end position="298"/>
    </location>
</feature>
<feature type="sequence conflict" description="In Ref. 2; AAH23148." evidence="6" ref="2">
    <original>I</original>
    <variation>V</variation>
    <location>
        <position position="30"/>
    </location>
</feature>
<feature type="sequence conflict" description="In Ref. 2; AAH23148." evidence="6" ref="2">
    <original>A</original>
    <variation>T</variation>
    <location>
        <position position="39"/>
    </location>
</feature>
<feature type="sequence conflict" description="In Ref. 2; AAH23148." evidence="6" ref="2">
    <original>R</original>
    <variation>S</variation>
    <location>
        <position position="177"/>
    </location>
</feature>
<feature type="sequence conflict" description="In Ref. 2; AAH23148." evidence="6" ref="2">
    <original>E</original>
    <variation>A</variation>
    <location>
        <position position="180"/>
    </location>
</feature>
<protein>
    <recommendedName>
        <fullName>Centromere protein O</fullName>
        <shortName>CENP-O</shortName>
    </recommendedName>
</protein>
<evidence type="ECO:0000250" key="1"/>
<evidence type="ECO:0000250" key="2">
    <source>
        <dbReference type="UniProtKB" id="Q9BU64"/>
    </source>
</evidence>
<evidence type="ECO:0000255" key="3"/>
<evidence type="ECO:0000256" key="4">
    <source>
        <dbReference type="SAM" id="MobiDB-lite"/>
    </source>
</evidence>
<evidence type="ECO:0000303" key="5">
    <source>
    </source>
</evidence>
<evidence type="ECO:0000305" key="6"/>
<accession>Q8K015</accession>
<accession>Q8R587</accession>
<accession>Q9CYY6</accession>
<organism>
    <name type="scientific">Mus musculus</name>
    <name type="common">Mouse</name>
    <dbReference type="NCBI Taxonomy" id="10090"/>
    <lineage>
        <taxon>Eukaryota</taxon>
        <taxon>Metazoa</taxon>
        <taxon>Chordata</taxon>
        <taxon>Craniata</taxon>
        <taxon>Vertebrata</taxon>
        <taxon>Euteleostomi</taxon>
        <taxon>Mammalia</taxon>
        <taxon>Eutheria</taxon>
        <taxon>Euarchontoglires</taxon>
        <taxon>Glires</taxon>
        <taxon>Rodentia</taxon>
        <taxon>Myomorpha</taxon>
        <taxon>Muroidea</taxon>
        <taxon>Muridae</taxon>
        <taxon>Murinae</taxon>
        <taxon>Mus</taxon>
        <taxon>Mus</taxon>
    </lineage>
</organism>
<dbReference type="EMBL" id="AK013198">
    <property type="protein sequence ID" value="BAB28707.1"/>
    <property type="molecule type" value="mRNA"/>
</dbReference>
<dbReference type="EMBL" id="AK029226">
    <property type="protein sequence ID" value="BAC26354.1"/>
    <property type="molecule type" value="mRNA"/>
</dbReference>
<dbReference type="EMBL" id="AK134266">
    <property type="protein sequence ID" value="BAE22073.1"/>
    <property type="molecule type" value="mRNA"/>
</dbReference>
<dbReference type="EMBL" id="BC023148">
    <property type="protein sequence ID" value="AAH23148.1"/>
    <property type="molecule type" value="mRNA"/>
</dbReference>
<dbReference type="EMBL" id="BC034399">
    <property type="protein sequence ID" value="AAH34399.1"/>
    <property type="molecule type" value="mRNA"/>
</dbReference>
<dbReference type="CCDS" id="CCDS25788.1">
    <molecule id="Q8K015-1"/>
</dbReference>
<dbReference type="RefSeq" id="NP_598807.2">
    <molecule id="Q8K015-1"/>
    <property type="nucleotide sequence ID" value="NM_134046.5"/>
</dbReference>
<dbReference type="RefSeq" id="XP_006515215.1">
    <property type="nucleotide sequence ID" value="XM_006515152.3"/>
</dbReference>
<dbReference type="RefSeq" id="XP_011242186.1">
    <molecule id="Q8K015-2"/>
    <property type="nucleotide sequence ID" value="XM_011243884.3"/>
</dbReference>
<dbReference type="RefSeq" id="XP_030102667.1">
    <molecule id="Q8K015-2"/>
    <property type="nucleotide sequence ID" value="XM_030246807.1"/>
</dbReference>
<dbReference type="SMR" id="Q8K015"/>
<dbReference type="BioGRID" id="206626">
    <property type="interactions" value="3"/>
</dbReference>
<dbReference type="ComplexPortal" id="CPX-5704">
    <property type="entry name" value="Kinetochore CCAN complex"/>
</dbReference>
<dbReference type="CORUM" id="Q8K015"/>
<dbReference type="FunCoup" id="Q8K015">
    <property type="interactions" value="2205"/>
</dbReference>
<dbReference type="IntAct" id="Q8K015">
    <property type="interactions" value="1"/>
</dbReference>
<dbReference type="MINT" id="Q8K015"/>
<dbReference type="STRING" id="10090.ENSMUSP00000119136"/>
<dbReference type="iPTMnet" id="Q8K015"/>
<dbReference type="PhosphoSitePlus" id="Q8K015"/>
<dbReference type="PaxDb" id="10090-ENSMUSP00000119136"/>
<dbReference type="PeptideAtlas" id="Q8K015"/>
<dbReference type="ProteomicsDB" id="281374">
    <molecule id="Q8K015-1"/>
</dbReference>
<dbReference type="ProteomicsDB" id="281375">
    <molecule id="Q8K015-2"/>
</dbReference>
<dbReference type="Pumba" id="Q8K015"/>
<dbReference type="Antibodypedia" id="27556">
    <property type="antibodies" value="162 antibodies from 30 providers"/>
</dbReference>
<dbReference type="DNASU" id="52504"/>
<dbReference type="Ensembl" id="ENSMUST00000111169.10">
    <molecule id="Q8K015-2"/>
    <property type="protein sequence ID" value="ENSMUSP00000106799.4"/>
    <property type="gene ID" value="ENSMUSG00000020652.18"/>
</dbReference>
<dbReference type="Ensembl" id="ENSMUST00000140975.8">
    <molecule id="Q8K015-1"/>
    <property type="protein sequence ID" value="ENSMUSP00000119136.2"/>
    <property type="gene ID" value="ENSMUSG00000020652.18"/>
</dbReference>
<dbReference type="GeneID" id="52504"/>
<dbReference type="KEGG" id="mmu:52504"/>
<dbReference type="UCSC" id="uc007mxn.1">
    <molecule id="Q8K015-1"/>
    <property type="organism name" value="mouse"/>
</dbReference>
<dbReference type="AGR" id="MGI:1923800"/>
<dbReference type="CTD" id="79172"/>
<dbReference type="MGI" id="MGI:1923800">
    <property type="gene designation" value="Cenpo"/>
</dbReference>
<dbReference type="VEuPathDB" id="HostDB:ENSMUSG00000020652"/>
<dbReference type="eggNOG" id="ENOG502RY72">
    <property type="taxonomic scope" value="Eukaryota"/>
</dbReference>
<dbReference type="GeneTree" id="ENSGT00390000016702"/>
<dbReference type="InParanoid" id="Q8K015"/>
<dbReference type="OMA" id="MEWANDG"/>
<dbReference type="OrthoDB" id="10050372at2759"/>
<dbReference type="PhylomeDB" id="Q8K015"/>
<dbReference type="TreeFam" id="TF335524"/>
<dbReference type="Reactome" id="R-MMU-141444">
    <property type="pathway name" value="Amplification of signal from unattached kinetochores via a MAD2 inhibitory signal"/>
</dbReference>
<dbReference type="Reactome" id="R-MMU-2467813">
    <property type="pathway name" value="Separation of Sister Chromatids"/>
</dbReference>
<dbReference type="Reactome" id="R-MMU-2500257">
    <property type="pathway name" value="Resolution of Sister Chromatid Cohesion"/>
</dbReference>
<dbReference type="Reactome" id="R-MMU-5663220">
    <property type="pathway name" value="RHO GTPases Activate Formins"/>
</dbReference>
<dbReference type="Reactome" id="R-MMU-606279">
    <property type="pathway name" value="Deposition of new CENPA-containing nucleosomes at the centromere"/>
</dbReference>
<dbReference type="Reactome" id="R-MMU-68877">
    <property type="pathway name" value="Mitotic Prometaphase"/>
</dbReference>
<dbReference type="Reactome" id="R-MMU-9648025">
    <property type="pathway name" value="EML4 and NUDC in mitotic spindle formation"/>
</dbReference>
<dbReference type="BioGRID-ORCS" id="52504">
    <property type="hits" value="29 hits in 80 CRISPR screens"/>
</dbReference>
<dbReference type="ChiTaRS" id="Cenpo">
    <property type="organism name" value="mouse"/>
</dbReference>
<dbReference type="PRO" id="PR:Q8K015"/>
<dbReference type="Proteomes" id="UP000000589">
    <property type="component" value="Chromosome 12"/>
</dbReference>
<dbReference type="RNAct" id="Q8K015">
    <property type="molecule type" value="protein"/>
</dbReference>
<dbReference type="Bgee" id="ENSMUSG00000020652">
    <property type="expression patterns" value="Expressed in primary oocyte and 212 other cell types or tissues"/>
</dbReference>
<dbReference type="ExpressionAtlas" id="Q8K015">
    <property type="expression patterns" value="baseline and differential"/>
</dbReference>
<dbReference type="GO" id="GO:0000939">
    <property type="term" value="C:inner kinetochore"/>
    <property type="evidence" value="ECO:0000266"/>
    <property type="project" value="ComplexPortal"/>
</dbReference>
<dbReference type="GO" id="GO:0016604">
    <property type="term" value="C:nuclear body"/>
    <property type="evidence" value="ECO:0007669"/>
    <property type="project" value="Ensembl"/>
</dbReference>
<dbReference type="GO" id="GO:0005634">
    <property type="term" value="C:nucleus"/>
    <property type="evidence" value="ECO:0000303"/>
    <property type="project" value="ComplexPortal"/>
</dbReference>
<dbReference type="GO" id="GO:0034508">
    <property type="term" value="P:centromere complex assembly"/>
    <property type="evidence" value="ECO:0007669"/>
    <property type="project" value="InterPro"/>
</dbReference>
<dbReference type="GO" id="GO:0007059">
    <property type="term" value="P:chromosome segregation"/>
    <property type="evidence" value="ECO:0000303"/>
    <property type="project" value="ComplexPortal"/>
</dbReference>
<dbReference type="CDD" id="cd23836">
    <property type="entry name" value="DRWD-C_CENP-O"/>
    <property type="match status" value="1"/>
</dbReference>
<dbReference type="CDD" id="cd23835">
    <property type="entry name" value="DRWD-N_CENP-O"/>
    <property type="match status" value="1"/>
</dbReference>
<dbReference type="InterPro" id="IPR018464">
    <property type="entry name" value="CENP-O"/>
</dbReference>
<dbReference type="PANTHER" id="PTHR14582:SF1">
    <property type="entry name" value="CENTROMERE PROTEIN O"/>
    <property type="match status" value="1"/>
</dbReference>
<dbReference type="PANTHER" id="PTHR14582">
    <property type="entry name" value="INNER KINETOCHORE SUBUNIT MAL2"/>
    <property type="match status" value="1"/>
</dbReference>
<dbReference type="Pfam" id="PF09496">
    <property type="entry name" value="CENP-O"/>
    <property type="match status" value="1"/>
</dbReference>
<reference key="1">
    <citation type="journal article" date="2005" name="Science">
        <title>The transcriptional landscape of the mammalian genome.</title>
        <authorList>
            <person name="Carninci P."/>
            <person name="Kasukawa T."/>
            <person name="Katayama S."/>
            <person name="Gough J."/>
            <person name="Frith M.C."/>
            <person name="Maeda N."/>
            <person name="Oyama R."/>
            <person name="Ravasi T."/>
            <person name="Lenhard B."/>
            <person name="Wells C."/>
            <person name="Kodzius R."/>
            <person name="Shimokawa K."/>
            <person name="Bajic V.B."/>
            <person name="Brenner S.E."/>
            <person name="Batalov S."/>
            <person name="Forrest A.R."/>
            <person name="Zavolan M."/>
            <person name="Davis M.J."/>
            <person name="Wilming L.G."/>
            <person name="Aidinis V."/>
            <person name="Allen J.E."/>
            <person name="Ambesi-Impiombato A."/>
            <person name="Apweiler R."/>
            <person name="Aturaliya R.N."/>
            <person name="Bailey T.L."/>
            <person name="Bansal M."/>
            <person name="Baxter L."/>
            <person name="Beisel K.W."/>
            <person name="Bersano T."/>
            <person name="Bono H."/>
            <person name="Chalk A.M."/>
            <person name="Chiu K.P."/>
            <person name="Choudhary V."/>
            <person name="Christoffels A."/>
            <person name="Clutterbuck D.R."/>
            <person name="Crowe M.L."/>
            <person name="Dalla E."/>
            <person name="Dalrymple B.P."/>
            <person name="de Bono B."/>
            <person name="Della Gatta G."/>
            <person name="di Bernardo D."/>
            <person name="Down T."/>
            <person name="Engstrom P."/>
            <person name="Fagiolini M."/>
            <person name="Faulkner G."/>
            <person name="Fletcher C.F."/>
            <person name="Fukushima T."/>
            <person name="Furuno M."/>
            <person name="Futaki S."/>
            <person name="Gariboldi M."/>
            <person name="Georgii-Hemming P."/>
            <person name="Gingeras T.R."/>
            <person name="Gojobori T."/>
            <person name="Green R.E."/>
            <person name="Gustincich S."/>
            <person name="Harbers M."/>
            <person name="Hayashi Y."/>
            <person name="Hensch T.K."/>
            <person name="Hirokawa N."/>
            <person name="Hill D."/>
            <person name="Huminiecki L."/>
            <person name="Iacono M."/>
            <person name="Ikeo K."/>
            <person name="Iwama A."/>
            <person name="Ishikawa T."/>
            <person name="Jakt M."/>
            <person name="Kanapin A."/>
            <person name="Katoh M."/>
            <person name="Kawasawa Y."/>
            <person name="Kelso J."/>
            <person name="Kitamura H."/>
            <person name="Kitano H."/>
            <person name="Kollias G."/>
            <person name="Krishnan S.P."/>
            <person name="Kruger A."/>
            <person name="Kummerfeld S.K."/>
            <person name="Kurochkin I.V."/>
            <person name="Lareau L.F."/>
            <person name="Lazarevic D."/>
            <person name="Lipovich L."/>
            <person name="Liu J."/>
            <person name="Liuni S."/>
            <person name="McWilliam S."/>
            <person name="Madan Babu M."/>
            <person name="Madera M."/>
            <person name="Marchionni L."/>
            <person name="Matsuda H."/>
            <person name="Matsuzawa S."/>
            <person name="Miki H."/>
            <person name="Mignone F."/>
            <person name="Miyake S."/>
            <person name="Morris K."/>
            <person name="Mottagui-Tabar S."/>
            <person name="Mulder N."/>
            <person name="Nakano N."/>
            <person name="Nakauchi H."/>
            <person name="Ng P."/>
            <person name="Nilsson R."/>
            <person name="Nishiguchi S."/>
            <person name="Nishikawa S."/>
            <person name="Nori F."/>
            <person name="Ohara O."/>
            <person name="Okazaki Y."/>
            <person name="Orlando V."/>
            <person name="Pang K.C."/>
            <person name="Pavan W.J."/>
            <person name="Pavesi G."/>
            <person name="Pesole G."/>
            <person name="Petrovsky N."/>
            <person name="Piazza S."/>
            <person name="Reed J."/>
            <person name="Reid J.F."/>
            <person name="Ring B.Z."/>
            <person name="Ringwald M."/>
            <person name="Rost B."/>
            <person name="Ruan Y."/>
            <person name="Salzberg S.L."/>
            <person name="Sandelin A."/>
            <person name="Schneider C."/>
            <person name="Schoenbach C."/>
            <person name="Sekiguchi K."/>
            <person name="Semple C.A."/>
            <person name="Seno S."/>
            <person name="Sessa L."/>
            <person name="Sheng Y."/>
            <person name="Shibata Y."/>
            <person name="Shimada H."/>
            <person name="Shimada K."/>
            <person name="Silva D."/>
            <person name="Sinclair B."/>
            <person name="Sperling S."/>
            <person name="Stupka E."/>
            <person name="Sugiura K."/>
            <person name="Sultana R."/>
            <person name="Takenaka Y."/>
            <person name="Taki K."/>
            <person name="Tammoja K."/>
            <person name="Tan S.L."/>
            <person name="Tang S."/>
            <person name="Taylor M.S."/>
            <person name="Tegner J."/>
            <person name="Teichmann S.A."/>
            <person name="Ueda H.R."/>
            <person name="van Nimwegen E."/>
            <person name="Verardo R."/>
            <person name="Wei C.L."/>
            <person name="Yagi K."/>
            <person name="Yamanishi H."/>
            <person name="Zabarovsky E."/>
            <person name="Zhu S."/>
            <person name="Zimmer A."/>
            <person name="Hide W."/>
            <person name="Bult C."/>
            <person name="Grimmond S.M."/>
            <person name="Teasdale R.D."/>
            <person name="Liu E.T."/>
            <person name="Brusic V."/>
            <person name="Quackenbush J."/>
            <person name="Wahlestedt C."/>
            <person name="Mattick J.S."/>
            <person name="Hume D.A."/>
            <person name="Kai C."/>
            <person name="Sasaki D."/>
            <person name="Tomaru Y."/>
            <person name="Fukuda S."/>
            <person name="Kanamori-Katayama M."/>
            <person name="Suzuki M."/>
            <person name="Aoki J."/>
            <person name="Arakawa T."/>
            <person name="Iida J."/>
            <person name="Imamura K."/>
            <person name="Itoh M."/>
            <person name="Kato T."/>
            <person name="Kawaji H."/>
            <person name="Kawagashira N."/>
            <person name="Kawashima T."/>
            <person name="Kojima M."/>
            <person name="Kondo S."/>
            <person name="Konno H."/>
            <person name="Nakano K."/>
            <person name="Ninomiya N."/>
            <person name="Nishio T."/>
            <person name="Okada M."/>
            <person name="Plessy C."/>
            <person name="Shibata K."/>
            <person name="Shiraki T."/>
            <person name="Suzuki S."/>
            <person name="Tagami M."/>
            <person name="Waki K."/>
            <person name="Watahiki A."/>
            <person name="Okamura-Oho Y."/>
            <person name="Suzuki H."/>
            <person name="Kawai J."/>
            <person name="Hayashizaki Y."/>
        </authorList>
    </citation>
    <scope>NUCLEOTIDE SEQUENCE [LARGE SCALE MRNA] (ISOFORMS 1 AND 2)</scope>
    <source>
        <strain>C57BL/6J</strain>
        <tissue>Forelimb</tissue>
        <tissue>Head</tissue>
    </source>
</reference>
<reference key="2">
    <citation type="journal article" date="2004" name="Genome Res.">
        <title>The status, quality, and expansion of the NIH full-length cDNA project: the Mammalian Gene Collection (MGC).</title>
        <authorList>
            <consortium name="The MGC Project Team"/>
        </authorList>
    </citation>
    <scope>NUCLEOTIDE SEQUENCE [LARGE SCALE MRNA] (ISOFORM 1)</scope>
    <source>
        <strain>Czech II</strain>
        <tissue>Eye</tissue>
        <tissue>Mammary tumor</tissue>
    </source>
</reference>
<sequence>MESANTLCPGRKCKGGVLAHLERLEAQTNISNRKSEEPAVRKKESSLRTKIRELRQQRDKLRAEVKQWGARVKEPPAKEDPSRTVISEQEVLEREWRNVDAILEAYRFTGLSGKLTSRGVCMCISTAFEGNLLDSYFVDLVIEKPLRIHHHSVPVFIPLEKIAAAHLQTDVQRFLFRLWEYLNAYAGRKYQADQLESDFCDVLTGPLQRNALCNLLSFTYKVEQRCQTFSFSARLLYEDPTAALPTNVTVTRPGVEASSPPWEEHRASHQMLFRTKPLHKVFASFSKETEKLHLNLVS</sequence>
<proteinExistence type="evidence at transcript level"/>
<gene>
    <name type="primary">Cenpo</name>
    <name type="synonym">Mcm21r</name>
</gene>